<accession>O27652</accession>
<gene>
    <name type="ordered locus">MTH_1615</name>
</gene>
<comment type="function">
    <text>DNA-binding protein which can interact with a randomly chosen 20-mer of double-stranded DNA.</text>
</comment>
<comment type="similarity">
    <text evidence="1">Belongs to the PDCD5 family.</text>
</comment>
<organism>
    <name type="scientific">Methanothermobacter thermautotrophicus (strain ATCC 29096 / DSM 1053 / JCM 10044 / NBRC 100330 / Delta H)</name>
    <name type="common">Methanobacterium thermoautotrophicum</name>
    <dbReference type="NCBI Taxonomy" id="187420"/>
    <lineage>
        <taxon>Archaea</taxon>
        <taxon>Methanobacteriati</taxon>
        <taxon>Methanobacteriota</taxon>
        <taxon>Methanomada group</taxon>
        <taxon>Methanobacteria</taxon>
        <taxon>Methanobacteriales</taxon>
        <taxon>Methanobacteriaceae</taxon>
        <taxon>Methanothermobacter</taxon>
    </lineage>
</organism>
<evidence type="ECO:0000305" key="1"/>
<evidence type="ECO:0007829" key="2">
    <source>
        <dbReference type="PDB" id="1EIJ"/>
    </source>
</evidence>
<dbReference type="EMBL" id="AE000666">
    <property type="protein sequence ID" value="AAB86088.1"/>
    <property type="molecule type" value="Genomic_DNA"/>
</dbReference>
<dbReference type="PIR" id="G69082">
    <property type="entry name" value="G69082"/>
</dbReference>
<dbReference type="RefSeq" id="WP_010877223.1">
    <property type="nucleotide sequence ID" value="NC_000916.1"/>
</dbReference>
<dbReference type="PDB" id="1EIJ">
    <property type="method" value="NMR"/>
    <property type="chains" value="A=32-111"/>
</dbReference>
<dbReference type="PDBsum" id="1EIJ"/>
<dbReference type="BMRB" id="O27652"/>
<dbReference type="SMR" id="O27652"/>
<dbReference type="FunCoup" id="O27652">
    <property type="interactions" value="87"/>
</dbReference>
<dbReference type="STRING" id="187420.MTH_1615"/>
<dbReference type="PaxDb" id="187420-MTH_1615"/>
<dbReference type="EnsemblBacteria" id="AAB86088">
    <property type="protein sequence ID" value="AAB86088"/>
    <property type="gene ID" value="MTH_1615"/>
</dbReference>
<dbReference type="KEGG" id="mth:MTH_1615"/>
<dbReference type="PATRIC" id="fig|187420.15.peg.1579"/>
<dbReference type="HOGENOM" id="CLU_122978_3_0_2"/>
<dbReference type="InParanoid" id="O27652"/>
<dbReference type="EvolutionaryTrace" id="O27652"/>
<dbReference type="Proteomes" id="UP000005223">
    <property type="component" value="Chromosome"/>
</dbReference>
<dbReference type="GO" id="GO:0005829">
    <property type="term" value="C:cytosol"/>
    <property type="evidence" value="ECO:0007669"/>
    <property type="project" value="TreeGrafter"/>
</dbReference>
<dbReference type="GO" id="GO:0003677">
    <property type="term" value="F:DNA binding"/>
    <property type="evidence" value="ECO:0007669"/>
    <property type="project" value="UniProtKB-UniRule"/>
</dbReference>
<dbReference type="Gene3D" id="1.10.8.140">
    <property type="entry name" value="PDCD5-like"/>
    <property type="match status" value="1"/>
</dbReference>
<dbReference type="HAMAP" id="MF_00026">
    <property type="entry name" value="dsDNA_bind"/>
    <property type="match status" value="1"/>
</dbReference>
<dbReference type="InterPro" id="IPR022889">
    <property type="entry name" value="DNA_bind_arc"/>
</dbReference>
<dbReference type="InterPro" id="IPR002836">
    <property type="entry name" value="PDCD5-like"/>
</dbReference>
<dbReference type="InterPro" id="IPR036883">
    <property type="entry name" value="PDCD5-like_sf"/>
</dbReference>
<dbReference type="NCBIfam" id="NF003268">
    <property type="entry name" value="PRK04239.1"/>
    <property type="match status" value="1"/>
</dbReference>
<dbReference type="PANTHER" id="PTHR10840">
    <property type="entry name" value="PROGRAMMED CELL DEATH PROTEIN 5"/>
    <property type="match status" value="1"/>
</dbReference>
<dbReference type="PANTHER" id="PTHR10840:SF0">
    <property type="entry name" value="PROGRAMMED CELL DEATH PROTEIN 5"/>
    <property type="match status" value="1"/>
</dbReference>
<dbReference type="Pfam" id="PF01984">
    <property type="entry name" value="dsDNA_bind"/>
    <property type="match status" value="1"/>
</dbReference>
<dbReference type="PIRSF" id="PIRSF015730">
    <property type="entry name" value="TFAR19"/>
    <property type="match status" value="1"/>
</dbReference>
<dbReference type="SUPFAM" id="SSF46950">
    <property type="entry name" value="Double-stranded DNA-binding domain"/>
    <property type="match status" value="1"/>
</dbReference>
<feature type="chain" id="PRO_0000121550" description="DNA-binding protein MTH_1615">
    <location>
        <begin position="1"/>
        <end position="111"/>
    </location>
</feature>
<feature type="strand" evidence="2">
    <location>
        <begin position="34"/>
        <end position="36"/>
    </location>
</feature>
<feature type="helix" evidence="2">
    <location>
        <begin position="41"/>
        <end position="44"/>
    </location>
</feature>
<feature type="helix" evidence="2">
    <location>
        <begin position="50"/>
        <end position="59"/>
    </location>
</feature>
<feature type="turn" evidence="2">
    <location>
        <begin position="60"/>
        <end position="62"/>
    </location>
</feature>
<feature type="helix" evidence="2">
    <location>
        <begin position="64"/>
        <end position="79"/>
    </location>
</feature>
<feature type="helix" evidence="2">
    <location>
        <begin position="89"/>
        <end position="99"/>
    </location>
</feature>
<protein>
    <recommendedName>
        <fullName>DNA-binding protein MTH_1615</fullName>
    </recommendedName>
</protein>
<name>DNBP_METTH</name>
<reference key="1">
    <citation type="journal article" date="1997" name="J. Bacteriol.">
        <title>Complete genome sequence of Methanobacterium thermoautotrophicum deltaH: functional analysis and comparative genomics.</title>
        <authorList>
            <person name="Smith D.R."/>
            <person name="Doucette-Stamm L.A."/>
            <person name="Deloughery C."/>
            <person name="Lee H.-M."/>
            <person name="Dubois J."/>
            <person name="Aldredge T."/>
            <person name="Bashirzadeh R."/>
            <person name="Blakely D."/>
            <person name="Cook R."/>
            <person name="Gilbert K."/>
            <person name="Harrison D."/>
            <person name="Hoang L."/>
            <person name="Keagle P."/>
            <person name="Lumm W."/>
            <person name="Pothier B."/>
            <person name="Qiu D."/>
            <person name="Spadafora R."/>
            <person name="Vicare R."/>
            <person name="Wang Y."/>
            <person name="Wierzbowski J."/>
            <person name="Gibson R."/>
            <person name="Jiwani N."/>
            <person name="Caruso A."/>
            <person name="Bush D."/>
            <person name="Safer H."/>
            <person name="Patwell D."/>
            <person name="Prabhakar S."/>
            <person name="McDougall S."/>
            <person name="Shimer G."/>
            <person name="Goyal A."/>
            <person name="Pietrovski S."/>
            <person name="Church G.M."/>
            <person name="Daniels C.J."/>
            <person name="Mao J.-I."/>
            <person name="Rice P."/>
            <person name="Noelling J."/>
            <person name="Reeve J.N."/>
        </authorList>
    </citation>
    <scope>NUCLEOTIDE SEQUENCE [LARGE SCALE GENOMIC DNA]</scope>
    <source>
        <strain>ATCC 29096 / DSM 1053 / JCM 10044 / NBRC 100330 / Delta H</strain>
    </source>
</reference>
<reference key="2">
    <citation type="journal article" date="2000" name="Nat. Struct. Biol.">
        <title>Structural proteomics of an archaeon.</title>
        <authorList>
            <person name="Christendat D."/>
            <person name="Yee A."/>
            <person name="Dharamsi A."/>
            <person name="Kluger Y."/>
            <person name="Savchenko A."/>
            <person name="Cort J.R."/>
            <person name="Booth V."/>
            <person name="Mackereth C.D."/>
            <person name="Saridakis V."/>
            <person name="Ekiel I."/>
            <person name="Kozlov G."/>
            <person name="Maxwell K.L."/>
            <person name="Wu N."/>
            <person name="McIntosh L.P."/>
            <person name="Gehring K."/>
            <person name="Kennedy M.A."/>
            <person name="Davidson A.R."/>
            <person name="Pai E.F."/>
            <person name="Gerstein M."/>
            <person name="Edwards A.M."/>
            <person name="Arrowsmith C.H."/>
        </authorList>
    </citation>
    <scope>STRUCTURE BY NMR OF 32-111</scope>
</reference>
<keyword id="KW-0002">3D-structure</keyword>
<keyword id="KW-0238">DNA-binding</keyword>
<keyword id="KW-1185">Reference proteome</keyword>
<sequence length="111" mass="13273">MTDLEEIRRKKMLELQQKAQQQAMEAEAQEQMRQQLEMQKKQIMMQILTPEARSRLANLRLTRPDFVEQIELQLIQLAQMGRVRSKITDEQLKELLKRVAGKKREIKISRK</sequence>
<proteinExistence type="evidence at protein level"/>